<keyword id="KW-0030">Aminoacyl-tRNA synthetase</keyword>
<keyword id="KW-0067">ATP-binding</keyword>
<keyword id="KW-0963">Cytoplasm</keyword>
<keyword id="KW-0436">Ligase</keyword>
<keyword id="KW-0479">Metal-binding</keyword>
<keyword id="KW-0547">Nucleotide-binding</keyword>
<keyword id="KW-0648">Protein biosynthesis</keyword>
<keyword id="KW-0694">RNA-binding</keyword>
<keyword id="KW-0820">tRNA-binding</keyword>
<keyword id="KW-0862">Zinc</keyword>
<protein>
    <recommendedName>
        <fullName evidence="1">Threonine--tRNA ligase</fullName>
        <ecNumber evidence="1">6.1.1.3</ecNumber>
    </recommendedName>
    <alternativeName>
        <fullName evidence="1">Threonyl-tRNA synthetase</fullName>
        <shortName evidence="1">ThrRS</shortName>
    </alternativeName>
</protein>
<feature type="chain" id="PRO_1000098619" description="Threonine--tRNA ligase">
    <location>
        <begin position="1"/>
        <end position="647"/>
    </location>
</feature>
<feature type="domain" description="TGS" evidence="2">
    <location>
        <begin position="1"/>
        <end position="61"/>
    </location>
</feature>
<feature type="region of interest" description="Catalytic" evidence="1">
    <location>
        <begin position="242"/>
        <end position="540"/>
    </location>
</feature>
<feature type="binding site" evidence="1">
    <location>
        <position position="336"/>
    </location>
    <ligand>
        <name>Zn(2+)</name>
        <dbReference type="ChEBI" id="CHEBI:29105"/>
    </ligand>
</feature>
<feature type="binding site" evidence="1">
    <location>
        <position position="387"/>
    </location>
    <ligand>
        <name>Zn(2+)</name>
        <dbReference type="ChEBI" id="CHEBI:29105"/>
    </ligand>
</feature>
<feature type="binding site" evidence="1">
    <location>
        <position position="517"/>
    </location>
    <ligand>
        <name>Zn(2+)</name>
        <dbReference type="ChEBI" id="CHEBI:29105"/>
    </ligand>
</feature>
<gene>
    <name evidence="1" type="primary">thrS</name>
    <name type="ordered locus">SPH_1742</name>
</gene>
<name>SYT_STRPI</name>
<accession>B1I703</accession>
<reference key="1">
    <citation type="journal article" date="2010" name="Genome Biol.">
        <title>Structure and dynamics of the pan-genome of Streptococcus pneumoniae and closely related species.</title>
        <authorList>
            <person name="Donati C."/>
            <person name="Hiller N.L."/>
            <person name="Tettelin H."/>
            <person name="Muzzi A."/>
            <person name="Croucher N.J."/>
            <person name="Angiuoli S.V."/>
            <person name="Oggioni M."/>
            <person name="Dunning Hotopp J.C."/>
            <person name="Hu F.Z."/>
            <person name="Riley D.R."/>
            <person name="Covacci A."/>
            <person name="Mitchell T.J."/>
            <person name="Bentley S.D."/>
            <person name="Kilian M."/>
            <person name="Ehrlich G.D."/>
            <person name="Rappuoli R."/>
            <person name="Moxon E.R."/>
            <person name="Masignani V."/>
        </authorList>
    </citation>
    <scope>NUCLEOTIDE SEQUENCE [LARGE SCALE GENOMIC DNA]</scope>
    <source>
        <strain>Hungary19A-6</strain>
    </source>
</reference>
<proteinExistence type="inferred from homology"/>
<organism>
    <name type="scientific">Streptococcus pneumoniae (strain Hungary19A-6)</name>
    <dbReference type="NCBI Taxonomy" id="487214"/>
    <lineage>
        <taxon>Bacteria</taxon>
        <taxon>Bacillati</taxon>
        <taxon>Bacillota</taxon>
        <taxon>Bacilli</taxon>
        <taxon>Lactobacillales</taxon>
        <taxon>Streptococcaceae</taxon>
        <taxon>Streptococcus</taxon>
    </lineage>
</organism>
<comment type="function">
    <text evidence="1">Catalyzes the attachment of threonine to tRNA(Thr) in a two-step reaction: L-threonine is first activated by ATP to form Thr-AMP and then transferred to the acceptor end of tRNA(Thr). Also edits incorrectly charged L-seryl-tRNA(Thr).</text>
</comment>
<comment type="catalytic activity">
    <reaction evidence="1">
        <text>tRNA(Thr) + L-threonine + ATP = L-threonyl-tRNA(Thr) + AMP + diphosphate + H(+)</text>
        <dbReference type="Rhea" id="RHEA:24624"/>
        <dbReference type="Rhea" id="RHEA-COMP:9670"/>
        <dbReference type="Rhea" id="RHEA-COMP:9704"/>
        <dbReference type="ChEBI" id="CHEBI:15378"/>
        <dbReference type="ChEBI" id="CHEBI:30616"/>
        <dbReference type="ChEBI" id="CHEBI:33019"/>
        <dbReference type="ChEBI" id="CHEBI:57926"/>
        <dbReference type="ChEBI" id="CHEBI:78442"/>
        <dbReference type="ChEBI" id="CHEBI:78534"/>
        <dbReference type="ChEBI" id="CHEBI:456215"/>
        <dbReference type="EC" id="6.1.1.3"/>
    </reaction>
</comment>
<comment type="cofactor">
    <cofactor evidence="1">
        <name>Zn(2+)</name>
        <dbReference type="ChEBI" id="CHEBI:29105"/>
    </cofactor>
    <text evidence="1">Binds 1 zinc ion per subunit.</text>
</comment>
<comment type="subunit">
    <text evidence="1">Homodimer.</text>
</comment>
<comment type="subcellular location">
    <subcellularLocation>
        <location evidence="1">Cytoplasm</location>
    </subcellularLocation>
</comment>
<comment type="similarity">
    <text evidence="1">Belongs to the class-II aminoacyl-tRNA synthetase family.</text>
</comment>
<dbReference type="EC" id="6.1.1.3" evidence="1"/>
<dbReference type="EMBL" id="CP000936">
    <property type="protein sequence ID" value="ACA37586.1"/>
    <property type="molecule type" value="Genomic_DNA"/>
</dbReference>
<dbReference type="RefSeq" id="WP_000608349.1">
    <property type="nucleotide sequence ID" value="NC_010380.1"/>
</dbReference>
<dbReference type="SMR" id="B1I703"/>
<dbReference type="GeneID" id="45653153"/>
<dbReference type="KEGG" id="spv:SPH_1742"/>
<dbReference type="HOGENOM" id="CLU_008554_3_2_9"/>
<dbReference type="Proteomes" id="UP000002163">
    <property type="component" value="Chromosome"/>
</dbReference>
<dbReference type="GO" id="GO:0005737">
    <property type="term" value="C:cytoplasm"/>
    <property type="evidence" value="ECO:0007669"/>
    <property type="project" value="UniProtKB-SubCell"/>
</dbReference>
<dbReference type="GO" id="GO:0005524">
    <property type="term" value="F:ATP binding"/>
    <property type="evidence" value="ECO:0007669"/>
    <property type="project" value="UniProtKB-UniRule"/>
</dbReference>
<dbReference type="GO" id="GO:0140096">
    <property type="term" value="F:catalytic activity, acting on a protein"/>
    <property type="evidence" value="ECO:0007669"/>
    <property type="project" value="UniProtKB-ARBA"/>
</dbReference>
<dbReference type="GO" id="GO:0046872">
    <property type="term" value="F:metal ion binding"/>
    <property type="evidence" value="ECO:0007669"/>
    <property type="project" value="UniProtKB-KW"/>
</dbReference>
<dbReference type="GO" id="GO:0004829">
    <property type="term" value="F:threonine-tRNA ligase activity"/>
    <property type="evidence" value="ECO:0007669"/>
    <property type="project" value="UniProtKB-UniRule"/>
</dbReference>
<dbReference type="GO" id="GO:0016740">
    <property type="term" value="F:transferase activity"/>
    <property type="evidence" value="ECO:0007669"/>
    <property type="project" value="UniProtKB-ARBA"/>
</dbReference>
<dbReference type="GO" id="GO:0000049">
    <property type="term" value="F:tRNA binding"/>
    <property type="evidence" value="ECO:0007669"/>
    <property type="project" value="UniProtKB-KW"/>
</dbReference>
<dbReference type="GO" id="GO:0006435">
    <property type="term" value="P:threonyl-tRNA aminoacylation"/>
    <property type="evidence" value="ECO:0007669"/>
    <property type="project" value="UniProtKB-UniRule"/>
</dbReference>
<dbReference type="CDD" id="cd01667">
    <property type="entry name" value="TGS_ThrRS"/>
    <property type="match status" value="1"/>
</dbReference>
<dbReference type="CDD" id="cd00860">
    <property type="entry name" value="ThrRS_anticodon"/>
    <property type="match status" value="1"/>
</dbReference>
<dbReference type="CDD" id="cd00771">
    <property type="entry name" value="ThrRS_core"/>
    <property type="match status" value="1"/>
</dbReference>
<dbReference type="FunFam" id="3.10.20.30:FF:000005">
    <property type="entry name" value="Threonine--tRNA ligase"/>
    <property type="match status" value="1"/>
</dbReference>
<dbReference type="FunFam" id="3.30.54.20:FF:000002">
    <property type="entry name" value="Threonine--tRNA ligase"/>
    <property type="match status" value="1"/>
</dbReference>
<dbReference type="FunFam" id="3.30.930.10:FF:000002">
    <property type="entry name" value="Threonine--tRNA ligase"/>
    <property type="match status" value="1"/>
</dbReference>
<dbReference type="FunFam" id="3.40.50.800:FF:000001">
    <property type="entry name" value="Threonine--tRNA ligase"/>
    <property type="match status" value="1"/>
</dbReference>
<dbReference type="FunFam" id="3.30.980.10:FF:000005">
    <property type="entry name" value="Threonyl-tRNA synthetase, mitochondrial"/>
    <property type="match status" value="1"/>
</dbReference>
<dbReference type="Gene3D" id="3.10.20.30">
    <property type="match status" value="1"/>
</dbReference>
<dbReference type="Gene3D" id="3.30.54.20">
    <property type="match status" value="1"/>
</dbReference>
<dbReference type="Gene3D" id="3.40.50.800">
    <property type="entry name" value="Anticodon-binding domain"/>
    <property type="match status" value="1"/>
</dbReference>
<dbReference type="Gene3D" id="3.30.930.10">
    <property type="entry name" value="Bira Bifunctional Protein, Domain 2"/>
    <property type="match status" value="1"/>
</dbReference>
<dbReference type="Gene3D" id="3.30.980.10">
    <property type="entry name" value="Threonyl-trna Synthetase, Chain A, domain 2"/>
    <property type="match status" value="1"/>
</dbReference>
<dbReference type="HAMAP" id="MF_00184">
    <property type="entry name" value="Thr_tRNA_synth"/>
    <property type="match status" value="1"/>
</dbReference>
<dbReference type="InterPro" id="IPR002314">
    <property type="entry name" value="aa-tRNA-synt_IIb"/>
</dbReference>
<dbReference type="InterPro" id="IPR006195">
    <property type="entry name" value="aa-tRNA-synth_II"/>
</dbReference>
<dbReference type="InterPro" id="IPR045864">
    <property type="entry name" value="aa-tRNA-synth_II/BPL/LPL"/>
</dbReference>
<dbReference type="InterPro" id="IPR004154">
    <property type="entry name" value="Anticodon-bd"/>
</dbReference>
<dbReference type="InterPro" id="IPR036621">
    <property type="entry name" value="Anticodon-bd_dom_sf"/>
</dbReference>
<dbReference type="InterPro" id="IPR012675">
    <property type="entry name" value="Beta-grasp_dom_sf"/>
</dbReference>
<dbReference type="InterPro" id="IPR004095">
    <property type="entry name" value="TGS"/>
</dbReference>
<dbReference type="InterPro" id="IPR012676">
    <property type="entry name" value="TGS-like"/>
</dbReference>
<dbReference type="InterPro" id="IPR002320">
    <property type="entry name" value="Thr-tRNA-ligase_IIa"/>
</dbReference>
<dbReference type="InterPro" id="IPR018163">
    <property type="entry name" value="Thr/Ala-tRNA-synth_IIc_edit"/>
</dbReference>
<dbReference type="InterPro" id="IPR047246">
    <property type="entry name" value="ThrRS_anticodon"/>
</dbReference>
<dbReference type="InterPro" id="IPR033728">
    <property type="entry name" value="ThrRS_core"/>
</dbReference>
<dbReference type="InterPro" id="IPR012947">
    <property type="entry name" value="tRNA_SAD"/>
</dbReference>
<dbReference type="NCBIfam" id="TIGR00418">
    <property type="entry name" value="thrS"/>
    <property type="match status" value="1"/>
</dbReference>
<dbReference type="PANTHER" id="PTHR11451:SF56">
    <property type="entry name" value="THREONINE--TRNA LIGASE 1"/>
    <property type="match status" value="1"/>
</dbReference>
<dbReference type="PANTHER" id="PTHR11451">
    <property type="entry name" value="THREONINE-TRNA LIGASE"/>
    <property type="match status" value="1"/>
</dbReference>
<dbReference type="Pfam" id="PF03129">
    <property type="entry name" value="HGTP_anticodon"/>
    <property type="match status" value="1"/>
</dbReference>
<dbReference type="Pfam" id="PF02824">
    <property type="entry name" value="TGS"/>
    <property type="match status" value="1"/>
</dbReference>
<dbReference type="Pfam" id="PF00587">
    <property type="entry name" value="tRNA-synt_2b"/>
    <property type="match status" value="1"/>
</dbReference>
<dbReference type="Pfam" id="PF07973">
    <property type="entry name" value="tRNA_SAD"/>
    <property type="match status" value="1"/>
</dbReference>
<dbReference type="PRINTS" id="PR01047">
    <property type="entry name" value="TRNASYNTHTHR"/>
</dbReference>
<dbReference type="SMART" id="SM00863">
    <property type="entry name" value="tRNA_SAD"/>
    <property type="match status" value="1"/>
</dbReference>
<dbReference type="SUPFAM" id="SSF52954">
    <property type="entry name" value="Class II aaRS ABD-related"/>
    <property type="match status" value="1"/>
</dbReference>
<dbReference type="SUPFAM" id="SSF55681">
    <property type="entry name" value="Class II aaRS and biotin synthetases"/>
    <property type="match status" value="1"/>
</dbReference>
<dbReference type="SUPFAM" id="SSF81271">
    <property type="entry name" value="TGS-like"/>
    <property type="match status" value="1"/>
</dbReference>
<dbReference type="SUPFAM" id="SSF55186">
    <property type="entry name" value="ThrRS/AlaRS common domain"/>
    <property type="match status" value="1"/>
</dbReference>
<dbReference type="PROSITE" id="PS50862">
    <property type="entry name" value="AA_TRNA_LIGASE_II"/>
    <property type="match status" value="1"/>
</dbReference>
<dbReference type="PROSITE" id="PS51880">
    <property type="entry name" value="TGS"/>
    <property type="match status" value="1"/>
</dbReference>
<sequence>MINITFPDGAVREFESGVTTFEIAQSISNSLAKKALAGKFNGKLIDTTRAITEDGSIEIVTPDHEDALPILRHSAAHLFAQAARRLFPDIHLGVGPAIEDGFYYDTDNTAGQISNEDLPRIEEEMQKIVKENFPSIREEVTKDEAREIFKNDPYKLELIEEHSEDEGGLTIYRQGEYVDLCRGPHVPSTGRIQIFHLLHVAGAYWRGNSDNAMMQRIYGTAWFDKKDLKNYLQMREEAKERDHRKLGKELDLFMISQEVGQGLPFWLPNGATIRRELERYIVNKELASGYQHVYTPPLASVELYKTSGHWDHYQEDMFPTMDMGDGEEFVLRPMNCPHHIQVFKHHVHSYRELPIRIAEIGMMHRYEKSGALTGLQRVREMSLNDGHLFVTPEQIQEEFQRALQLIIDVYEDFNLTDYRFRLSLRDPQDTHKYFDNDEMWENAQTMLRAALDEMGVDYFEAEGEAAFYGPKLDIQIKTALGKEETLSTIQLDFLLPERFDLKYIGADGEDHRPVMIHRGVISTMERFTAILIENYKGAFPTWLAPHQVTLIPVSNEKHVDYAWEVAKKLRDRGVRADVDERNEKMQFKIRASQTSKIPYQLIVGDKEMEDETVNVRRYGQKETQTVSVDNFVQAILADIANKSRVEK</sequence>
<evidence type="ECO:0000255" key="1">
    <source>
        <dbReference type="HAMAP-Rule" id="MF_00184"/>
    </source>
</evidence>
<evidence type="ECO:0000255" key="2">
    <source>
        <dbReference type="PROSITE-ProRule" id="PRU01228"/>
    </source>
</evidence>